<dbReference type="EMBL" id="GU293051">
    <property type="protein sequence ID" value="ADB56867.1"/>
    <property type="molecule type" value="mRNA"/>
</dbReference>
<dbReference type="SMR" id="D2Y2H4"/>
<dbReference type="ArachnoServer" id="AS001549">
    <property type="toxin name" value="U7-theraphotoxin-Hhn1l"/>
</dbReference>
<dbReference type="GO" id="GO:0005576">
    <property type="term" value="C:extracellular region"/>
    <property type="evidence" value="ECO:0007669"/>
    <property type="project" value="UniProtKB-SubCell"/>
</dbReference>
<dbReference type="GO" id="GO:0008200">
    <property type="term" value="F:ion channel inhibitor activity"/>
    <property type="evidence" value="ECO:0007669"/>
    <property type="project" value="InterPro"/>
</dbReference>
<dbReference type="GO" id="GO:0090729">
    <property type="term" value="F:toxin activity"/>
    <property type="evidence" value="ECO:0007669"/>
    <property type="project" value="UniProtKB-KW"/>
</dbReference>
<dbReference type="InterPro" id="IPR011696">
    <property type="entry name" value="Huwentoxin-1"/>
</dbReference>
<dbReference type="Pfam" id="PF07740">
    <property type="entry name" value="Toxin_12"/>
    <property type="match status" value="1"/>
</dbReference>
<dbReference type="SUPFAM" id="SSF57059">
    <property type="entry name" value="omega toxin-like"/>
    <property type="match status" value="1"/>
</dbReference>
<protein>
    <recommendedName>
        <fullName>U7-theraphotoxin-Hhn1l</fullName>
        <shortName>U7-TRTX-Hhn1l</shortName>
    </recommendedName>
    <alternativeName>
        <fullName>Hainantoxin-XIII-14</fullName>
        <shortName>HNTX-XIII-14</shortName>
    </alternativeName>
</protein>
<organism>
    <name type="scientific">Cyriopagopus hainanus</name>
    <name type="common">Chinese bird spider</name>
    <name type="synonym">Haplopelma hainanum</name>
    <dbReference type="NCBI Taxonomy" id="209901"/>
    <lineage>
        <taxon>Eukaryota</taxon>
        <taxon>Metazoa</taxon>
        <taxon>Ecdysozoa</taxon>
        <taxon>Arthropoda</taxon>
        <taxon>Chelicerata</taxon>
        <taxon>Arachnida</taxon>
        <taxon>Araneae</taxon>
        <taxon>Mygalomorphae</taxon>
        <taxon>Theraphosidae</taxon>
        <taxon>Haplopelma</taxon>
    </lineage>
</organism>
<feature type="signal peptide" evidence="2">
    <location>
        <begin position="1"/>
        <end position="19"/>
    </location>
</feature>
<feature type="propeptide" id="PRO_0000400715" evidence="1">
    <location>
        <begin position="20"/>
        <end position="50"/>
    </location>
</feature>
<feature type="peptide" id="PRO_0000400716" description="U7-theraphotoxin-Hhn1l">
    <location>
        <begin position="51"/>
        <end position="90"/>
    </location>
</feature>
<feature type="disulfide bond" evidence="1">
    <location>
        <begin position="51"/>
        <end position="65"/>
    </location>
</feature>
<feature type="disulfide bond" evidence="1">
    <location>
        <begin position="58"/>
        <end position="70"/>
    </location>
</feature>
<feature type="disulfide bond" evidence="1">
    <location>
        <begin position="64"/>
        <end position="81"/>
    </location>
</feature>
<sequence>MKTAIFTVVLALAVFAVLSFGWEANEKALSEEFTELIHEKEAASETEARECRYFWGECHDPMPCCDWLVCRYKWPITYNICVWNRTFPEK</sequence>
<keyword id="KW-1015">Disulfide bond</keyword>
<keyword id="KW-0872">Ion channel impairing toxin</keyword>
<keyword id="KW-0960">Knottin</keyword>
<keyword id="KW-0964">Secreted</keyword>
<keyword id="KW-0732">Signal</keyword>
<keyword id="KW-0800">Toxin</keyword>
<accession>D2Y2H4</accession>
<reference key="1">
    <citation type="journal article" date="2010" name="J. Proteome Res.">
        <title>Molecular diversification of peptide toxins from the tarantula Haplopelma hainanum (Ornithoctonus hainana) venom based on transcriptomic, peptidomic, and genomic analyses.</title>
        <authorList>
            <person name="Tang X."/>
            <person name="Zhang Y."/>
            <person name="Hu W."/>
            <person name="Xu D."/>
            <person name="Tao H."/>
            <person name="Yang X."/>
            <person name="Li Y."/>
            <person name="Jiang L."/>
            <person name="Liang S."/>
        </authorList>
    </citation>
    <scope>NUCLEOTIDE SEQUENCE [LARGE SCALE MRNA]</scope>
    <source>
        <tissue>Venom gland</tissue>
    </source>
</reference>
<name>H13N1_CYRHA</name>
<proteinExistence type="evidence at transcript level"/>
<evidence type="ECO:0000250" key="1"/>
<evidence type="ECO:0000255" key="2"/>
<evidence type="ECO:0000305" key="3"/>
<comment type="function">
    <text evidence="1">Ion channel inhibitor.</text>
</comment>
<comment type="subcellular location">
    <subcellularLocation>
        <location evidence="1">Secreted</location>
    </subcellularLocation>
</comment>
<comment type="tissue specificity">
    <text>Expressed by the venom gland.</text>
</comment>
<comment type="domain">
    <text evidence="1">The presence of a 'disulfide through disulfide knot' structurally defines this protein as a knottin.</text>
</comment>
<comment type="similarity">
    <text evidence="3">Belongs to the neurotoxin 10 (Hwtx-1) family. 13 (Hntx-13) subfamily.</text>
</comment>